<proteinExistence type="inferred from homology"/>
<comment type="function">
    <text evidence="1">One of the primary rRNA binding proteins. Required for association of the 30S and 50S subunits to form the 70S ribosome, for tRNA binding and peptide bond formation. It has been suggested to have peptidyltransferase activity; this is somewhat controversial. Makes several contacts with the 16S rRNA in the 70S ribosome.</text>
</comment>
<comment type="subunit">
    <text evidence="1">Part of the 50S ribosomal subunit. Forms a bridge to the 30S subunit in the 70S ribosome.</text>
</comment>
<comment type="similarity">
    <text evidence="1">Belongs to the universal ribosomal protein uL2 family.</text>
</comment>
<gene>
    <name evidence="1" type="primary">rplB</name>
    <name type="ordered locus">lpg0332</name>
</gene>
<accession>Q5ZYP0</accession>
<protein>
    <recommendedName>
        <fullName evidence="1">Large ribosomal subunit protein uL2</fullName>
    </recommendedName>
    <alternativeName>
        <fullName evidence="3">50S ribosomal protein L2</fullName>
    </alternativeName>
</protein>
<feature type="chain" id="PRO_0000237200" description="Large ribosomal subunit protein uL2">
    <location>
        <begin position="1"/>
        <end position="275"/>
    </location>
</feature>
<feature type="region of interest" description="Disordered" evidence="2">
    <location>
        <begin position="223"/>
        <end position="260"/>
    </location>
</feature>
<name>RL2_LEGPH</name>
<reference key="1">
    <citation type="journal article" date="2004" name="Science">
        <title>The genomic sequence of the accidental pathogen Legionella pneumophila.</title>
        <authorList>
            <person name="Chien M."/>
            <person name="Morozova I."/>
            <person name="Shi S."/>
            <person name="Sheng H."/>
            <person name="Chen J."/>
            <person name="Gomez S.M."/>
            <person name="Asamani G."/>
            <person name="Hill K."/>
            <person name="Nuara J."/>
            <person name="Feder M."/>
            <person name="Rineer J."/>
            <person name="Greenberg J.J."/>
            <person name="Steshenko V."/>
            <person name="Park S.H."/>
            <person name="Zhao B."/>
            <person name="Teplitskaya E."/>
            <person name="Edwards J.R."/>
            <person name="Pampou S."/>
            <person name="Georghiou A."/>
            <person name="Chou I.-C."/>
            <person name="Iannuccilli W."/>
            <person name="Ulz M.E."/>
            <person name="Kim D.H."/>
            <person name="Geringer-Sameth A."/>
            <person name="Goldsberry C."/>
            <person name="Morozov P."/>
            <person name="Fischer S.G."/>
            <person name="Segal G."/>
            <person name="Qu X."/>
            <person name="Rzhetsky A."/>
            <person name="Zhang P."/>
            <person name="Cayanis E."/>
            <person name="De Jong P.J."/>
            <person name="Ju J."/>
            <person name="Kalachikov S."/>
            <person name="Shuman H.A."/>
            <person name="Russo J.J."/>
        </authorList>
    </citation>
    <scope>NUCLEOTIDE SEQUENCE [LARGE SCALE GENOMIC DNA]</scope>
    <source>
        <strain>Philadelphia 1 / ATCC 33152 / DSM 7513</strain>
    </source>
</reference>
<evidence type="ECO:0000255" key="1">
    <source>
        <dbReference type="HAMAP-Rule" id="MF_01320"/>
    </source>
</evidence>
<evidence type="ECO:0000256" key="2">
    <source>
        <dbReference type="SAM" id="MobiDB-lite"/>
    </source>
</evidence>
<evidence type="ECO:0000305" key="3"/>
<organism>
    <name type="scientific">Legionella pneumophila subsp. pneumophila (strain Philadelphia 1 / ATCC 33152 / DSM 7513)</name>
    <dbReference type="NCBI Taxonomy" id="272624"/>
    <lineage>
        <taxon>Bacteria</taxon>
        <taxon>Pseudomonadati</taxon>
        <taxon>Pseudomonadota</taxon>
        <taxon>Gammaproteobacteria</taxon>
        <taxon>Legionellales</taxon>
        <taxon>Legionellaceae</taxon>
        <taxon>Legionella</taxon>
    </lineage>
</organism>
<sequence length="275" mass="30091">MALLKSKPTSPGKRGEIRVVHHDIYKGKPHAALVEKLKKTGGRNNQGRITVRHIGGGQRQKYRIIDFKRNKDGILGRVERLEYDPNRTALIALISYKDGEKRYIIAPSNLEVGATIQSGADSPISVGNCLPLKNIPVGTTIHCVEMKPGKGAQMLRSAGCSGQLVAKEGVYATLRLRSGEMRKIHVLCRAVIGEVSNSEHNLRALGKAGAKRWRGIRPTVRGVAMNPVDHPHGGGEGRTSGGRHPVSPWGLPTKGYKTRSNKRTDTFIVRGRKKK</sequence>
<keyword id="KW-1185">Reference proteome</keyword>
<keyword id="KW-0687">Ribonucleoprotein</keyword>
<keyword id="KW-0689">Ribosomal protein</keyword>
<keyword id="KW-0694">RNA-binding</keyword>
<keyword id="KW-0699">rRNA-binding</keyword>
<dbReference type="EMBL" id="AE017354">
    <property type="protein sequence ID" value="AAU26429.1"/>
    <property type="molecule type" value="Genomic_DNA"/>
</dbReference>
<dbReference type="RefSeq" id="WP_010946081.1">
    <property type="nucleotide sequence ID" value="NC_002942.5"/>
</dbReference>
<dbReference type="RefSeq" id="YP_094376.1">
    <property type="nucleotide sequence ID" value="NC_002942.5"/>
</dbReference>
<dbReference type="SMR" id="Q5ZYP0"/>
<dbReference type="STRING" id="272624.lpg0332"/>
<dbReference type="PaxDb" id="272624-lpg0332"/>
<dbReference type="GeneID" id="57034335"/>
<dbReference type="KEGG" id="lpn:lpg0332"/>
<dbReference type="PATRIC" id="fig|272624.6.peg.339"/>
<dbReference type="eggNOG" id="COG0090">
    <property type="taxonomic scope" value="Bacteria"/>
</dbReference>
<dbReference type="HOGENOM" id="CLU_036235_2_1_6"/>
<dbReference type="OrthoDB" id="9778722at2"/>
<dbReference type="Proteomes" id="UP000000609">
    <property type="component" value="Chromosome"/>
</dbReference>
<dbReference type="GO" id="GO:0015934">
    <property type="term" value="C:large ribosomal subunit"/>
    <property type="evidence" value="ECO:0007669"/>
    <property type="project" value="InterPro"/>
</dbReference>
<dbReference type="GO" id="GO:0019843">
    <property type="term" value="F:rRNA binding"/>
    <property type="evidence" value="ECO:0007669"/>
    <property type="project" value="UniProtKB-UniRule"/>
</dbReference>
<dbReference type="GO" id="GO:0003735">
    <property type="term" value="F:structural constituent of ribosome"/>
    <property type="evidence" value="ECO:0007669"/>
    <property type="project" value="InterPro"/>
</dbReference>
<dbReference type="GO" id="GO:0016740">
    <property type="term" value="F:transferase activity"/>
    <property type="evidence" value="ECO:0007669"/>
    <property type="project" value="InterPro"/>
</dbReference>
<dbReference type="GO" id="GO:0002181">
    <property type="term" value="P:cytoplasmic translation"/>
    <property type="evidence" value="ECO:0007669"/>
    <property type="project" value="TreeGrafter"/>
</dbReference>
<dbReference type="FunFam" id="2.30.30.30:FF:000001">
    <property type="entry name" value="50S ribosomal protein L2"/>
    <property type="match status" value="1"/>
</dbReference>
<dbReference type="FunFam" id="2.40.50.140:FF:000003">
    <property type="entry name" value="50S ribosomal protein L2"/>
    <property type="match status" value="1"/>
</dbReference>
<dbReference type="FunFam" id="4.10.950.10:FF:000001">
    <property type="entry name" value="50S ribosomal protein L2"/>
    <property type="match status" value="1"/>
</dbReference>
<dbReference type="Gene3D" id="2.30.30.30">
    <property type="match status" value="1"/>
</dbReference>
<dbReference type="Gene3D" id="2.40.50.140">
    <property type="entry name" value="Nucleic acid-binding proteins"/>
    <property type="match status" value="1"/>
</dbReference>
<dbReference type="Gene3D" id="4.10.950.10">
    <property type="entry name" value="Ribosomal protein L2, domain 3"/>
    <property type="match status" value="1"/>
</dbReference>
<dbReference type="HAMAP" id="MF_01320_B">
    <property type="entry name" value="Ribosomal_uL2_B"/>
    <property type="match status" value="1"/>
</dbReference>
<dbReference type="InterPro" id="IPR012340">
    <property type="entry name" value="NA-bd_OB-fold"/>
</dbReference>
<dbReference type="InterPro" id="IPR014722">
    <property type="entry name" value="Rib_uL2_dom2"/>
</dbReference>
<dbReference type="InterPro" id="IPR002171">
    <property type="entry name" value="Ribosomal_uL2"/>
</dbReference>
<dbReference type="InterPro" id="IPR005880">
    <property type="entry name" value="Ribosomal_uL2_bac/org-type"/>
</dbReference>
<dbReference type="InterPro" id="IPR022669">
    <property type="entry name" value="Ribosomal_uL2_C"/>
</dbReference>
<dbReference type="InterPro" id="IPR022671">
    <property type="entry name" value="Ribosomal_uL2_CS"/>
</dbReference>
<dbReference type="InterPro" id="IPR014726">
    <property type="entry name" value="Ribosomal_uL2_dom3"/>
</dbReference>
<dbReference type="InterPro" id="IPR022666">
    <property type="entry name" value="Ribosomal_uL2_RNA-bd_dom"/>
</dbReference>
<dbReference type="InterPro" id="IPR008991">
    <property type="entry name" value="Translation_prot_SH3-like_sf"/>
</dbReference>
<dbReference type="NCBIfam" id="TIGR01171">
    <property type="entry name" value="rplB_bact"/>
    <property type="match status" value="1"/>
</dbReference>
<dbReference type="PANTHER" id="PTHR13691:SF5">
    <property type="entry name" value="LARGE RIBOSOMAL SUBUNIT PROTEIN UL2M"/>
    <property type="match status" value="1"/>
</dbReference>
<dbReference type="PANTHER" id="PTHR13691">
    <property type="entry name" value="RIBOSOMAL PROTEIN L2"/>
    <property type="match status" value="1"/>
</dbReference>
<dbReference type="Pfam" id="PF00181">
    <property type="entry name" value="Ribosomal_L2"/>
    <property type="match status" value="1"/>
</dbReference>
<dbReference type="Pfam" id="PF03947">
    <property type="entry name" value="Ribosomal_L2_C"/>
    <property type="match status" value="1"/>
</dbReference>
<dbReference type="PIRSF" id="PIRSF002158">
    <property type="entry name" value="Ribosomal_L2"/>
    <property type="match status" value="1"/>
</dbReference>
<dbReference type="SMART" id="SM01383">
    <property type="entry name" value="Ribosomal_L2"/>
    <property type="match status" value="1"/>
</dbReference>
<dbReference type="SMART" id="SM01382">
    <property type="entry name" value="Ribosomal_L2_C"/>
    <property type="match status" value="1"/>
</dbReference>
<dbReference type="SUPFAM" id="SSF50249">
    <property type="entry name" value="Nucleic acid-binding proteins"/>
    <property type="match status" value="1"/>
</dbReference>
<dbReference type="SUPFAM" id="SSF50104">
    <property type="entry name" value="Translation proteins SH3-like domain"/>
    <property type="match status" value="1"/>
</dbReference>
<dbReference type="PROSITE" id="PS00467">
    <property type="entry name" value="RIBOSOMAL_L2"/>
    <property type="match status" value="1"/>
</dbReference>